<accession>C1CD52</accession>
<protein>
    <recommendedName>
        <fullName evidence="1">UDP-N-acetylglucosamine--N-acetylmuramyl-(pentapeptide) pyrophosphoryl-undecaprenol N-acetylglucosamine transferase</fullName>
        <ecNumber evidence="1">2.4.1.227</ecNumber>
    </recommendedName>
    <alternativeName>
        <fullName evidence="1">Undecaprenyl-PP-MurNAc-pentapeptide-UDPGlcNAc GlcNAc transferase</fullName>
    </alternativeName>
</protein>
<gene>
    <name evidence="1" type="primary">murG</name>
    <name type="ordered locus">SPJ_0639</name>
</gene>
<dbReference type="EC" id="2.4.1.227" evidence="1"/>
<dbReference type="EMBL" id="CP000919">
    <property type="protein sequence ID" value="ACO19098.1"/>
    <property type="molecule type" value="Genomic_DNA"/>
</dbReference>
<dbReference type="RefSeq" id="WP_000724837.1">
    <property type="nucleotide sequence ID" value="NC_012466.1"/>
</dbReference>
<dbReference type="SMR" id="C1CD52"/>
<dbReference type="CAZy" id="GT28">
    <property type="family name" value="Glycosyltransferase Family 28"/>
</dbReference>
<dbReference type="KEGG" id="sjj:SPJ_0639"/>
<dbReference type="HOGENOM" id="CLU_037404_0_0_9"/>
<dbReference type="UniPathway" id="UPA00219"/>
<dbReference type="Proteomes" id="UP000002206">
    <property type="component" value="Chromosome"/>
</dbReference>
<dbReference type="GO" id="GO:0005886">
    <property type="term" value="C:plasma membrane"/>
    <property type="evidence" value="ECO:0007669"/>
    <property type="project" value="UniProtKB-SubCell"/>
</dbReference>
<dbReference type="GO" id="GO:0050511">
    <property type="term" value="F:undecaprenyldiphospho-muramoylpentapeptide beta-N-acetylglucosaminyltransferase activity"/>
    <property type="evidence" value="ECO:0007669"/>
    <property type="project" value="UniProtKB-UniRule"/>
</dbReference>
<dbReference type="GO" id="GO:0005975">
    <property type="term" value="P:carbohydrate metabolic process"/>
    <property type="evidence" value="ECO:0007669"/>
    <property type="project" value="InterPro"/>
</dbReference>
<dbReference type="GO" id="GO:0051301">
    <property type="term" value="P:cell division"/>
    <property type="evidence" value="ECO:0007669"/>
    <property type="project" value="UniProtKB-KW"/>
</dbReference>
<dbReference type="GO" id="GO:0071555">
    <property type="term" value="P:cell wall organization"/>
    <property type="evidence" value="ECO:0007669"/>
    <property type="project" value="UniProtKB-KW"/>
</dbReference>
<dbReference type="GO" id="GO:0030259">
    <property type="term" value="P:lipid glycosylation"/>
    <property type="evidence" value="ECO:0007669"/>
    <property type="project" value="UniProtKB-UniRule"/>
</dbReference>
<dbReference type="GO" id="GO:0009252">
    <property type="term" value="P:peptidoglycan biosynthetic process"/>
    <property type="evidence" value="ECO:0007669"/>
    <property type="project" value="UniProtKB-UniRule"/>
</dbReference>
<dbReference type="GO" id="GO:0008360">
    <property type="term" value="P:regulation of cell shape"/>
    <property type="evidence" value="ECO:0007669"/>
    <property type="project" value="UniProtKB-KW"/>
</dbReference>
<dbReference type="CDD" id="cd03785">
    <property type="entry name" value="GT28_MurG"/>
    <property type="match status" value="1"/>
</dbReference>
<dbReference type="Gene3D" id="3.40.50.2000">
    <property type="entry name" value="Glycogen Phosphorylase B"/>
    <property type="match status" value="2"/>
</dbReference>
<dbReference type="HAMAP" id="MF_00033">
    <property type="entry name" value="MurG"/>
    <property type="match status" value="1"/>
</dbReference>
<dbReference type="InterPro" id="IPR006009">
    <property type="entry name" value="GlcNAc_MurG"/>
</dbReference>
<dbReference type="InterPro" id="IPR007235">
    <property type="entry name" value="Glyco_trans_28_C"/>
</dbReference>
<dbReference type="InterPro" id="IPR004276">
    <property type="entry name" value="GlycoTrans_28_N"/>
</dbReference>
<dbReference type="PANTHER" id="PTHR21015:SF27">
    <property type="entry name" value="UDP-N-ACETYLGLUCOSAMINE--N-ACETYLMURAMYL-(PENTAPEPTIDE) PYROPHOSPHORYL-UNDECAPRENOL N-ACETYLGLUCOSAMINE TRANSFERASE"/>
    <property type="match status" value="1"/>
</dbReference>
<dbReference type="PANTHER" id="PTHR21015">
    <property type="entry name" value="UDP-N-ACETYLGLUCOSAMINE--N-ACETYLMURAMYL-(PENTAPEPTIDE) PYROPHOSPHORYL-UNDECAPRENOL N-ACETYLGLUCOSAMINE TRANSFERASE 1"/>
    <property type="match status" value="1"/>
</dbReference>
<dbReference type="Pfam" id="PF04101">
    <property type="entry name" value="Glyco_tran_28_C"/>
    <property type="match status" value="1"/>
</dbReference>
<dbReference type="Pfam" id="PF03033">
    <property type="entry name" value="Glyco_transf_28"/>
    <property type="match status" value="1"/>
</dbReference>
<dbReference type="SUPFAM" id="SSF53756">
    <property type="entry name" value="UDP-Glycosyltransferase/glycogen phosphorylase"/>
    <property type="match status" value="1"/>
</dbReference>
<organism>
    <name type="scientific">Streptococcus pneumoniae (strain JJA)</name>
    <dbReference type="NCBI Taxonomy" id="488222"/>
    <lineage>
        <taxon>Bacteria</taxon>
        <taxon>Bacillati</taxon>
        <taxon>Bacillota</taxon>
        <taxon>Bacilli</taxon>
        <taxon>Lactobacillales</taxon>
        <taxon>Streptococcaceae</taxon>
        <taxon>Streptococcus</taxon>
    </lineage>
</organism>
<sequence>MKKIVFTGGGTVGHVTLNLLLMPKFIEDGWEVHYIGDKRGIEHQEILKSGLDVTFHSIATGKLRRYFSWQNMLDVFKVGWGIVQSLFIMLRLRPQTLFSKGGFVSVPPVIAARVSGVPVFIHESDLSMGLANKIAYKFATKMYSTFEQASSLSKVEHVGAVTKVSDQKNPEPDELVDIQTHFNHKLPTVLFVGGSAGARVFNQLVTDHKKELTERYNIINLTGDSSLNELSQNLFRVDYVTDLYQPLLELADIVVTRGGANTIFELLAIAKLHVIVPLGREASRGDQIENAAYFVKKGYAEDLQESDLTLDSLEEKLSHLLSHKEDYQAKMKASKELKSLADFYQLLKKDLS</sequence>
<keyword id="KW-0131">Cell cycle</keyword>
<keyword id="KW-0132">Cell division</keyword>
<keyword id="KW-1003">Cell membrane</keyword>
<keyword id="KW-0133">Cell shape</keyword>
<keyword id="KW-0961">Cell wall biogenesis/degradation</keyword>
<keyword id="KW-0328">Glycosyltransferase</keyword>
<keyword id="KW-0472">Membrane</keyword>
<keyword id="KW-0573">Peptidoglycan synthesis</keyword>
<keyword id="KW-0808">Transferase</keyword>
<name>MURG_STRZJ</name>
<comment type="function">
    <text evidence="1">Cell wall formation. Catalyzes the transfer of a GlcNAc subunit on undecaprenyl-pyrophosphoryl-MurNAc-pentapeptide (lipid intermediate I) to form undecaprenyl-pyrophosphoryl-MurNAc-(pentapeptide)GlcNAc (lipid intermediate II).</text>
</comment>
<comment type="catalytic activity">
    <reaction evidence="1">
        <text>Mur2Ac(oyl-L-Ala-gamma-D-Glu-L-Lys-D-Ala-D-Ala)-di-trans,octa-cis-undecaprenyl diphosphate + UDP-N-acetyl-alpha-D-glucosamine = beta-D-GlcNAc-(1-&gt;4)-Mur2Ac(oyl-L-Ala-gamma-D-Glu-L-Lys-D-Ala-D-Ala)-di-trans,octa-cis-undecaprenyl diphosphate + UDP + H(+)</text>
        <dbReference type="Rhea" id="RHEA:23192"/>
        <dbReference type="ChEBI" id="CHEBI:15378"/>
        <dbReference type="ChEBI" id="CHEBI:57705"/>
        <dbReference type="ChEBI" id="CHEBI:58223"/>
        <dbReference type="ChEBI" id="CHEBI:60032"/>
        <dbReference type="ChEBI" id="CHEBI:60033"/>
        <dbReference type="EC" id="2.4.1.227"/>
    </reaction>
</comment>
<comment type="pathway">
    <text evidence="1">Cell wall biogenesis; peptidoglycan biosynthesis.</text>
</comment>
<comment type="subcellular location">
    <subcellularLocation>
        <location evidence="1">Cell membrane</location>
        <topology evidence="1">Peripheral membrane protein</topology>
        <orientation evidence="1">Cytoplasmic side</orientation>
    </subcellularLocation>
</comment>
<comment type="similarity">
    <text evidence="1">Belongs to the glycosyltransferase 28 family. MurG subfamily.</text>
</comment>
<evidence type="ECO:0000255" key="1">
    <source>
        <dbReference type="HAMAP-Rule" id="MF_00033"/>
    </source>
</evidence>
<proteinExistence type="inferred from homology"/>
<reference key="1">
    <citation type="journal article" date="2010" name="Genome Biol.">
        <title>Structure and dynamics of the pan-genome of Streptococcus pneumoniae and closely related species.</title>
        <authorList>
            <person name="Donati C."/>
            <person name="Hiller N.L."/>
            <person name="Tettelin H."/>
            <person name="Muzzi A."/>
            <person name="Croucher N.J."/>
            <person name="Angiuoli S.V."/>
            <person name="Oggioni M."/>
            <person name="Dunning Hotopp J.C."/>
            <person name="Hu F.Z."/>
            <person name="Riley D.R."/>
            <person name="Covacci A."/>
            <person name="Mitchell T.J."/>
            <person name="Bentley S.D."/>
            <person name="Kilian M."/>
            <person name="Ehrlich G.D."/>
            <person name="Rappuoli R."/>
            <person name="Moxon E.R."/>
            <person name="Masignani V."/>
        </authorList>
    </citation>
    <scope>NUCLEOTIDE SEQUENCE [LARGE SCALE GENOMIC DNA]</scope>
    <source>
        <strain>JJA</strain>
    </source>
</reference>
<feature type="chain" id="PRO_1000192147" description="UDP-N-acetylglucosamine--N-acetylmuramyl-(pentapeptide) pyrophosphoryl-undecaprenol N-acetylglucosamine transferase">
    <location>
        <begin position="1"/>
        <end position="352"/>
    </location>
</feature>
<feature type="binding site" evidence="1">
    <location>
        <position position="195"/>
    </location>
    <ligand>
        <name>UDP-N-acetyl-alpha-D-glucosamine</name>
        <dbReference type="ChEBI" id="CHEBI:57705"/>
    </ligand>
</feature>
<feature type="binding site" evidence="1">
    <location>
        <position position="287"/>
    </location>
    <ligand>
        <name>UDP-N-acetyl-alpha-D-glucosamine</name>
        <dbReference type="ChEBI" id="CHEBI:57705"/>
    </ligand>
</feature>